<organism>
    <name type="scientific">Salmonella heidelberg (strain SL476)</name>
    <dbReference type="NCBI Taxonomy" id="454169"/>
    <lineage>
        <taxon>Bacteria</taxon>
        <taxon>Pseudomonadati</taxon>
        <taxon>Pseudomonadota</taxon>
        <taxon>Gammaproteobacteria</taxon>
        <taxon>Enterobacterales</taxon>
        <taxon>Enterobacteriaceae</taxon>
        <taxon>Salmonella</taxon>
    </lineage>
</organism>
<feature type="chain" id="PRO_1000094287" description="2-C-methyl-D-erythritol 2,4-cyclodiphosphate synthase">
    <location>
        <begin position="1"/>
        <end position="159"/>
    </location>
</feature>
<feature type="binding site" evidence="1">
    <location>
        <begin position="8"/>
        <end position="10"/>
    </location>
    <ligand>
        <name>4-CDP-2-C-methyl-D-erythritol 2-phosphate</name>
        <dbReference type="ChEBI" id="CHEBI:57919"/>
    </ligand>
</feature>
<feature type="binding site" evidence="1">
    <location>
        <position position="8"/>
    </location>
    <ligand>
        <name>a divalent metal cation</name>
        <dbReference type="ChEBI" id="CHEBI:60240"/>
    </ligand>
</feature>
<feature type="binding site" evidence="1">
    <location>
        <position position="10"/>
    </location>
    <ligand>
        <name>a divalent metal cation</name>
        <dbReference type="ChEBI" id="CHEBI:60240"/>
    </ligand>
</feature>
<feature type="binding site" evidence="1">
    <location>
        <begin position="34"/>
        <end position="35"/>
    </location>
    <ligand>
        <name>4-CDP-2-C-methyl-D-erythritol 2-phosphate</name>
        <dbReference type="ChEBI" id="CHEBI:57919"/>
    </ligand>
</feature>
<feature type="binding site" evidence="1">
    <location>
        <position position="42"/>
    </location>
    <ligand>
        <name>a divalent metal cation</name>
        <dbReference type="ChEBI" id="CHEBI:60240"/>
    </ligand>
</feature>
<feature type="binding site" evidence="1">
    <location>
        <begin position="56"/>
        <end position="58"/>
    </location>
    <ligand>
        <name>4-CDP-2-C-methyl-D-erythritol 2-phosphate</name>
        <dbReference type="ChEBI" id="CHEBI:57919"/>
    </ligand>
</feature>
<feature type="binding site" evidence="1">
    <location>
        <begin position="61"/>
        <end position="65"/>
    </location>
    <ligand>
        <name>4-CDP-2-C-methyl-D-erythritol 2-phosphate</name>
        <dbReference type="ChEBI" id="CHEBI:57919"/>
    </ligand>
</feature>
<feature type="binding site" evidence="1">
    <location>
        <begin position="100"/>
        <end position="106"/>
    </location>
    <ligand>
        <name>4-CDP-2-C-methyl-D-erythritol 2-phosphate</name>
        <dbReference type="ChEBI" id="CHEBI:57919"/>
    </ligand>
</feature>
<feature type="binding site" evidence="1">
    <location>
        <begin position="132"/>
        <end position="135"/>
    </location>
    <ligand>
        <name>4-CDP-2-C-methyl-D-erythritol 2-phosphate</name>
        <dbReference type="ChEBI" id="CHEBI:57919"/>
    </ligand>
</feature>
<feature type="binding site" evidence="1">
    <location>
        <position position="139"/>
    </location>
    <ligand>
        <name>4-CDP-2-C-methyl-D-erythritol 2-phosphate</name>
        <dbReference type="ChEBI" id="CHEBI:57919"/>
    </ligand>
</feature>
<feature type="binding site" evidence="1">
    <location>
        <position position="142"/>
    </location>
    <ligand>
        <name>4-CDP-2-C-methyl-D-erythritol 2-phosphate</name>
        <dbReference type="ChEBI" id="CHEBI:57919"/>
    </ligand>
</feature>
<feature type="site" description="Transition state stabilizer" evidence="1">
    <location>
        <position position="34"/>
    </location>
</feature>
<feature type="site" description="Transition state stabilizer" evidence="1">
    <location>
        <position position="133"/>
    </location>
</feature>
<comment type="function">
    <text evidence="1">Involved in the biosynthesis of isopentenyl diphosphate (IPP) and dimethylallyl diphosphate (DMAPP), two major building blocks of isoprenoid compounds. Catalyzes the conversion of 4-diphosphocytidyl-2-C-methyl-D-erythritol 2-phosphate (CDP-ME2P) to 2-C-methyl-D-erythritol 2,4-cyclodiphosphate (ME-CPP) with a corresponding release of cytidine 5-monophosphate (CMP).</text>
</comment>
<comment type="catalytic activity">
    <reaction evidence="1">
        <text>4-CDP-2-C-methyl-D-erythritol 2-phosphate = 2-C-methyl-D-erythritol 2,4-cyclic diphosphate + CMP</text>
        <dbReference type="Rhea" id="RHEA:23864"/>
        <dbReference type="ChEBI" id="CHEBI:57919"/>
        <dbReference type="ChEBI" id="CHEBI:58483"/>
        <dbReference type="ChEBI" id="CHEBI:60377"/>
        <dbReference type="EC" id="4.6.1.12"/>
    </reaction>
</comment>
<comment type="cofactor">
    <cofactor evidence="1">
        <name>a divalent metal cation</name>
        <dbReference type="ChEBI" id="CHEBI:60240"/>
    </cofactor>
    <text evidence="1">Binds 1 divalent metal cation per subunit.</text>
</comment>
<comment type="pathway">
    <text evidence="1">Isoprenoid biosynthesis; isopentenyl diphosphate biosynthesis via DXP pathway; isopentenyl diphosphate from 1-deoxy-D-xylulose 5-phosphate: step 4/6.</text>
</comment>
<comment type="subunit">
    <text evidence="1">Homotrimer.</text>
</comment>
<comment type="similarity">
    <text evidence="1">Belongs to the IspF family.</text>
</comment>
<name>ISPF_SALHS</name>
<dbReference type="EC" id="4.6.1.12" evidence="1"/>
<dbReference type="EMBL" id="CP001120">
    <property type="protein sequence ID" value="ACF67889.1"/>
    <property type="molecule type" value="Genomic_DNA"/>
</dbReference>
<dbReference type="RefSeq" id="WP_001219244.1">
    <property type="nucleotide sequence ID" value="NC_011083.1"/>
</dbReference>
<dbReference type="SMR" id="B4TFW6"/>
<dbReference type="KEGG" id="seh:SeHA_C3119"/>
<dbReference type="HOGENOM" id="CLU_084630_2_0_6"/>
<dbReference type="UniPathway" id="UPA00056">
    <property type="reaction ID" value="UER00095"/>
</dbReference>
<dbReference type="Proteomes" id="UP000001866">
    <property type="component" value="Chromosome"/>
</dbReference>
<dbReference type="GO" id="GO:0008685">
    <property type="term" value="F:2-C-methyl-D-erythritol 2,4-cyclodiphosphate synthase activity"/>
    <property type="evidence" value="ECO:0007669"/>
    <property type="project" value="UniProtKB-UniRule"/>
</dbReference>
<dbReference type="GO" id="GO:0046872">
    <property type="term" value="F:metal ion binding"/>
    <property type="evidence" value="ECO:0007669"/>
    <property type="project" value="UniProtKB-KW"/>
</dbReference>
<dbReference type="GO" id="GO:0019288">
    <property type="term" value="P:isopentenyl diphosphate biosynthetic process, methylerythritol 4-phosphate pathway"/>
    <property type="evidence" value="ECO:0007669"/>
    <property type="project" value="UniProtKB-UniRule"/>
</dbReference>
<dbReference type="GO" id="GO:0016114">
    <property type="term" value="P:terpenoid biosynthetic process"/>
    <property type="evidence" value="ECO:0007669"/>
    <property type="project" value="InterPro"/>
</dbReference>
<dbReference type="CDD" id="cd00554">
    <property type="entry name" value="MECDP_synthase"/>
    <property type="match status" value="1"/>
</dbReference>
<dbReference type="FunFam" id="3.30.1330.50:FF:000001">
    <property type="entry name" value="2-C-methyl-D-erythritol 2,4-cyclodiphosphate synthase"/>
    <property type="match status" value="1"/>
</dbReference>
<dbReference type="Gene3D" id="3.30.1330.50">
    <property type="entry name" value="2-C-methyl-D-erythritol 2,4-cyclodiphosphate synthase"/>
    <property type="match status" value="1"/>
</dbReference>
<dbReference type="HAMAP" id="MF_00107">
    <property type="entry name" value="IspF"/>
    <property type="match status" value="1"/>
</dbReference>
<dbReference type="InterPro" id="IPR003526">
    <property type="entry name" value="MECDP_synthase"/>
</dbReference>
<dbReference type="InterPro" id="IPR020555">
    <property type="entry name" value="MECDP_synthase_CS"/>
</dbReference>
<dbReference type="InterPro" id="IPR036571">
    <property type="entry name" value="MECDP_synthase_sf"/>
</dbReference>
<dbReference type="NCBIfam" id="TIGR00151">
    <property type="entry name" value="ispF"/>
    <property type="match status" value="1"/>
</dbReference>
<dbReference type="PANTHER" id="PTHR43181">
    <property type="entry name" value="2-C-METHYL-D-ERYTHRITOL 2,4-CYCLODIPHOSPHATE SYNTHASE, CHLOROPLASTIC"/>
    <property type="match status" value="1"/>
</dbReference>
<dbReference type="PANTHER" id="PTHR43181:SF1">
    <property type="entry name" value="2-C-METHYL-D-ERYTHRITOL 2,4-CYCLODIPHOSPHATE SYNTHASE, CHLOROPLASTIC"/>
    <property type="match status" value="1"/>
</dbReference>
<dbReference type="Pfam" id="PF02542">
    <property type="entry name" value="YgbB"/>
    <property type="match status" value="1"/>
</dbReference>
<dbReference type="SUPFAM" id="SSF69765">
    <property type="entry name" value="IpsF-like"/>
    <property type="match status" value="1"/>
</dbReference>
<dbReference type="PROSITE" id="PS01350">
    <property type="entry name" value="ISPF"/>
    <property type="match status" value="1"/>
</dbReference>
<evidence type="ECO:0000255" key="1">
    <source>
        <dbReference type="HAMAP-Rule" id="MF_00107"/>
    </source>
</evidence>
<keyword id="KW-0414">Isoprene biosynthesis</keyword>
<keyword id="KW-0456">Lyase</keyword>
<keyword id="KW-0479">Metal-binding</keyword>
<protein>
    <recommendedName>
        <fullName evidence="1">2-C-methyl-D-erythritol 2,4-cyclodiphosphate synthase</fullName>
        <shortName evidence="1">MECDP-synthase</shortName>
        <shortName evidence="1">MECPP-synthase</shortName>
        <shortName evidence="1">MECPS</shortName>
        <ecNumber evidence="1">4.6.1.12</ecNumber>
    </recommendedName>
</protein>
<proteinExistence type="inferred from homology"/>
<gene>
    <name evidence="1" type="primary">ispF</name>
    <name type="ordered locus">SeHA_C3119</name>
</gene>
<reference key="1">
    <citation type="journal article" date="2011" name="J. Bacteriol.">
        <title>Comparative genomics of 28 Salmonella enterica isolates: evidence for CRISPR-mediated adaptive sublineage evolution.</title>
        <authorList>
            <person name="Fricke W.F."/>
            <person name="Mammel M.K."/>
            <person name="McDermott P.F."/>
            <person name="Tartera C."/>
            <person name="White D.G."/>
            <person name="Leclerc J.E."/>
            <person name="Ravel J."/>
            <person name="Cebula T.A."/>
        </authorList>
    </citation>
    <scope>NUCLEOTIDE SEQUENCE [LARGE SCALE GENOMIC DNA]</scope>
    <source>
        <strain>SL476</strain>
    </source>
</reference>
<sequence>MRIGHGFDVHAFGGEGPIIIGGVRIPYEKGLLAHSDGDVALHALTDALLGAAALGDIGKLFPDTDPAFKGADSRELLREAWRRIQAKGYTLGNVDVTIIAQAPKMLPHIPQMRVFIAEDLGCHMDDVNVKATTTEKLGFTGRGEGIACEAVALLMKAAK</sequence>
<accession>B4TFW6</accession>